<protein>
    <recommendedName>
        <fullName evidence="1">Proteasome subunit beta</fullName>
        <ecNumber evidence="1">3.4.25.1</ecNumber>
    </recommendedName>
    <alternativeName>
        <fullName evidence="1">20S proteasome beta subunit</fullName>
    </alternativeName>
    <alternativeName>
        <fullName evidence="1">Proteasome core protein PsmB</fullName>
    </alternativeName>
</protein>
<name>PSB_FERPA</name>
<dbReference type="EC" id="3.4.25.1" evidence="1"/>
<dbReference type="EMBL" id="CP001899">
    <property type="protein sequence ID" value="ADC65079.1"/>
    <property type="molecule type" value="Genomic_DNA"/>
</dbReference>
<dbReference type="RefSeq" id="WP_012965422.1">
    <property type="nucleotide sequence ID" value="NC_013849.1"/>
</dbReference>
<dbReference type="SMR" id="D3RX66"/>
<dbReference type="STRING" id="589924.Ferp_0913"/>
<dbReference type="MEROPS" id="T01.002"/>
<dbReference type="PaxDb" id="589924-Ferp_0913"/>
<dbReference type="GeneID" id="8778421"/>
<dbReference type="KEGG" id="fpl:Ferp_0913"/>
<dbReference type="eggNOG" id="arCOG00970">
    <property type="taxonomic scope" value="Archaea"/>
</dbReference>
<dbReference type="HOGENOM" id="CLU_035750_7_2_2"/>
<dbReference type="OrthoDB" id="6330at2157"/>
<dbReference type="Proteomes" id="UP000002613">
    <property type="component" value="Chromosome"/>
</dbReference>
<dbReference type="GO" id="GO:0005737">
    <property type="term" value="C:cytoplasm"/>
    <property type="evidence" value="ECO:0007669"/>
    <property type="project" value="UniProtKB-SubCell"/>
</dbReference>
<dbReference type="GO" id="GO:0019774">
    <property type="term" value="C:proteasome core complex, beta-subunit complex"/>
    <property type="evidence" value="ECO:0007669"/>
    <property type="project" value="UniProtKB-UniRule"/>
</dbReference>
<dbReference type="GO" id="GO:0004298">
    <property type="term" value="F:threonine-type endopeptidase activity"/>
    <property type="evidence" value="ECO:0007669"/>
    <property type="project" value="UniProtKB-UniRule"/>
</dbReference>
<dbReference type="GO" id="GO:0010498">
    <property type="term" value="P:proteasomal protein catabolic process"/>
    <property type="evidence" value="ECO:0007669"/>
    <property type="project" value="UniProtKB-UniRule"/>
</dbReference>
<dbReference type="CDD" id="cd03764">
    <property type="entry name" value="proteasome_beta_archeal"/>
    <property type="match status" value="1"/>
</dbReference>
<dbReference type="FunFam" id="3.60.20.10:FF:000049">
    <property type="entry name" value="Proteasome subunit beta"/>
    <property type="match status" value="1"/>
</dbReference>
<dbReference type="Gene3D" id="3.60.20.10">
    <property type="entry name" value="Glutamine Phosphoribosylpyrophosphate, subunit 1, domain 1"/>
    <property type="match status" value="1"/>
</dbReference>
<dbReference type="HAMAP" id="MF_02113_A">
    <property type="entry name" value="Proteasome_B_A"/>
    <property type="match status" value="1"/>
</dbReference>
<dbReference type="InterPro" id="IPR029055">
    <property type="entry name" value="Ntn_hydrolases_N"/>
</dbReference>
<dbReference type="InterPro" id="IPR019983">
    <property type="entry name" value="Pept_T1A_Psome_bsu_arc"/>
</dbReference>
<dbReference type="InterPro" id="IPR000243">
    <property type="entry name" value="Pept_T1A_subB"/>
</dbReference>
<dbReference type="InterPro" id="IPR016050">
    <property type="entry name" value="Proteasome_bsu_CS"/>
</dbReference>
<dbReference type="InterPro" id="IPR001353">
    <property type="entry name" value="Proteasome_sua/b"/>
</dbReference>
<dbReference type="InterPro" id="IPR023333">
    <property type="entry name" value="Proteasome_suB-type"/>
</dbReference>
<dbReference type="NCBIfam" id="TIGR03634">
    <property type="entry name" value="arc_protsome_B"/>
    <property type="match status" value="1"/>
</dbReference>
<dbReference type="PANTHER" id="PTHR32194:SF0">
    <property type="entry name" value="ATP-DEPENDENT PROTEASE SUBUNIT HSLV"/>
    <property type="match status" value="1"/>
</dbReference>
<dbReference type="PANTHER" id="PTHR32194">
    <property type="entry name" value="METALLOPROTEASE TLDD"/>
    <property type="match status" value="1"/>
</dbReference>
<dbReference type="Pfam" id="PF00227">
    <property type="entry name" value="Proteasome"/>
    <property type="match status" value="1"/>
</dbReference>
<dbReference type="PRINTS" id="PR00141">
    <property type="entry name" value="PROTEASOME"/>
</dbReference>
<dbReference type="SUPFAM" id="SSF56235">
    <property type="entry name" value="N-terminal nucleophile aminohydrolases (Ntn hydrolases)"/>
    <property type="match status" value="1"/>
</dbReference>
<dbReference type="PROSITE" id="PS00854">
    <property type="entry name" value="PROTEASOME_BETA_1"/>
    <property type="match status" value="1"/>
</dbReference>
<dbReference type="PROSITE" id="PS51476">
    <property type="entry name" value="PROTEASOME_BETA_2"/>
    <property type="match status" value="1"/>
</dbReference>
<proteinExistence type="inferred from homology"/>
<sequence length="210" mass="22979">MIHDKVFKGTTTVGLVCKDGVVLATEKRATMGNFIASRRAKKIYKITDRIAMTTAGSVGDAQFLARLIKVETNLYTIRKEEEPTVKAVATLVSNLLNSVRYFPYLVQLLIGGVDKTGAKIYSIDPIGGAIEEIDIVATGSGSPMAYGVLEDNYRKDINVDEAVELAIRAIYSAMKRDSASGDGIDVVKITEKEYVELTPEEIEAILEKLR</sequence>
<comment type="function">
    <text evidence="1">Component of the proteasome core, a large protease complex with broad specificity involved in protein degradation.</text>
</comment>
<comment type="catalytic activity">
    <reaction evidence="1">
        <text>Cleavage of peptide bonds with very broad specificity.</text>
        <dbReference type="EC" id="3.4.25.1"/>
    </reaction>
</comment>
<comment type="activity regulation">
    <text evidence="1">The formation of the proteasomal ATPase PAN-20S proteasome complex, via the docking of the C-termini of PAN into the intersubunit pockets in the alpha-rings, triggers opening of the gate for substrate entry. Interconversion between the open-gate and close-gate conformations leads to a dynamic regulation of the 20S proteasome proteolysis activity.</text>
</comment>
<comment type="subunit">
    <text evidence="1">The 20S proteasome core is composed of 14 alpha and 14 beta subunits that assemble into four stacked heptameric rings, resulting in a barrel-shaped structure. The two inner rings, each composed of seven catalytic beta subunits, are sandwiched by two outer rings, each composed of seven alpha subunits. The catalytic chamber with the active sites is on the inside of the barrel. Has a gated structure, the ends of the cylinder being occluded by the N-termini of the alpha-subunits. Is capped at one or both ends by the proteasome regulatory ATPase, PAN.</text>
</comment>
<comment type="subcellular location">
    <subcellularLocation>
        <location evidence="1">Cytoplasm</location>
    </subcellularLocation>
</comment>
<comment type="similarity">
    <text evidence="1">Belongs to the peptidase T1B family.</text>
</comment>
<accession>D3RX66</accession>
<gene>
    <name evidence="1" type="primary">psmB</name>
    <name type="ordered locus">Ferp_0913</name>
</gene>
<keyword id="KW-0068">Autocatalytic cleavage</keyword>
<keyword id="KW-0963">Cytoplasm</keyword>
<keyword id="KW-0378">Hydrolase</keyword>
<keyword id="KW-0645">Protease</keyword>
<keyword id="KW-0647">Proteasome</keyword>
<keyword id="KW-1185">Reference proteome</keyword>
<keyword id="KW-0888">Threonine protease</keyword>
<keyword id="KW-0865">Zymogen</keyword>
<evidence type="ECO:0000255" key="1">
    <source>
        <dbReference type="HAMAP-Rule" id="MF_02113"/>
    </source>
</evidence>
<feature type="propeptide" id="PRO_0000397292" description="Removed in mature form; by autocatalysis" evidence="1">
    <location>
        <begin position="1"/>
        <end position="9"/>
    </location>
</feature>
<feature type="chain" id="PRO_0000397293" description="Proteasome subunit beta">
    <location>
        <begin position="10"/>
        <end position="210"/>
    </location>
</feature>
<feature type="active site" description="Nucleophile" evidence="1">
    <location>
        <position position="10"/>
    </location>
</feature>
<organism>
    <name type="scientific">Ferroglobus placidus (strain DSM 10642 / AEDII12DO)</name>
    <dbReference type="NCBI Taxonomy" id="589924"/>
    <lineage>
        <taxon>Archaea</taxon>
        <taxon>Methanobacteriati</taxon>
        <taxon>Methanobacteriota</taxon>
        <taxon>Archaeoglobi</taxon>
        <taxon>Archaeoglobales</taxon>
        <taxon>Archaeoglobaceae</taxon>
        <taxon>Ferroglobus</taxon>
    </lineage>
</organism>
<reference key="1">
    <citation type="submission" date="2010-02" db="EMBL/GenBank/DDBJ databases">
        <title>Complete sequence of Ferroglobus placidus DSM 10642.</title>
        <authorList>
            <consortium name="US DOE Joint Genome Institute"/>
            <person name="Lucas S."/>
            <person name="Copeland A."/>
            <person name="Lapidus A."/>
            <person name="Cheng J.-F."/>
            <person name="Bruce D."/>
            <person name="Goodwin L."/>
            <person name="Pitluck S."/>
            <person name="Saunders E."/>
            <person name="Brettin T."/>
            <person name="Detter J.C."/>
            <person name="Han C."/>
            <person name="Tapia R."/>
            <person name="Larimer F."/>
            <person name="Land M."/>
            <person name="Hauser L."/>
            <person name="Kyrpides N."/>
            <person name="Ivanova N."/>
            <person name="Holmes D."/>
            <person name="Lovley D."/>
            <person name="Kyrpides N."/>
            <person name="Anderson I.J."/>
            <person name="Woyke T."/>
        </authorList>
    </citation>
    <scope>NUCLEOTIDE SEQUENCE [LARGE SCALE GENOMIC DNA]</scope>
    <source>
        <strain>DSM 10642 / AEDII12DO</strain>
    </source>
</reference>